<dbReference type="EMBL" id="CP000863">
    <property type="protein sequence ID" value="ACC58581.1"/>
    <property type="molecule type" value="Genomic_DNA"/>
</dbReference>
<dbReference type="RefSeq" id="WP_001291845.1">
    <property type="nucleotide sequence ID" value="NZ_CP031380.1"/>
</dbReference>
<dbReference type="SMR" id="B2HZ99"/>
<dbReference type="GeneID" id="9380825"/>
<dbReference type="KEGG" id="abc:ACICU_03270"/>
<dbReference type="HOGENOM" id="CLU_073626_1_1_6"/>
<dbReference type="Proteomes" id="UP000008839">
    <property type="component" value="Chromosome"/>
</dbReference>
<dbReference type="GO" id="GO:0022627">
    <property type="term" value="C:cytosolic small ribosomal subunit"/>
    <property type="evidence" value="ECO:0007669"/>
    <property type="project" value="TreeGrafter"/>
</dbReference>
<dbReference type="GO" id="GO:0019843">
    <property type="term" value="F:rRNA binding"/>
    <property type="evidence" value="ECO:0007669"/>
    <property type="project" value="UniProtKB-UniRule"/>
</dbReference>
<dbReference type="GO" id="GO:0003735">
    <property type="term" value="F:structural constituent of ribosome"/>
    <property type="evidence" value="ECO:0007669"/>
    <property type="project" value="InterPro"/>
</dbReference>
<dbReference type="GO" id="GO:0006412">
    <property type="term" value="P:translation"/>
    <property type="evidence" value="ECO:0007669"/>
    <property type="project" value="UniProtKB-UniRule"/>
</dbReference>
<dbReference type="CDD" id="cd00364">
    <property type="entry name" value="Ribosomal_uS17"/>
    <property type="match status" value="1"/>
</dbReference>
<dbReference type="FunFam" id="2.40.50.140:FF:000014">
    <property type="entry name" value="30S ribosomal protein S17"/>
    <property type="match status" value="1"/>
</dbReference>
<dbReference type="Gene3D" id="2.40.50.140">
    <property type="entry name" value="Nucleic acid-binding proteins"/>
    <property type="match status" value="1"/>
</dbReference>
<dbReference type="HAMAP" id="MF_01345_B">
    <property type="entry name" value="Ribosomal_uS17_B"/>
    <property type="match status" value="1"/>
</dbReference>
<dbReference type="InterPro" id="IPR012340">
    <property type="entry name" value="NA-bd_OB-fold"/>
</dbReference>
<dbReference type="InterPro" id="IPR000266">
    <property type="entry name" value="Ribosomal_uS17"/>
</dbReference>
<dbReference type="InterPro" id="IPR019984">
    <property type="entry name" value="Ribosomal_uS17_bact/chlr"/>
</dbReference>
<dbReference type="InterPro" id="IPR019979">
    <property type="entry name" value="Ribosomal_uS17_CS"/>
</dbReference>
<dbReference type="NCBIfam" id="NF004123">
    <property type="entry name" value="PRK05610.1"/>
    <property type="match status" value="1"/>
</dbReference>
<dbReference type="NCBIfam" id="TIGR03635">
    <property type="entry name" value="uS17_bact"/>
    <property type="match status" value="1"/>
</dbReference>
<dbReference type="PANTHER" id="PTHR10744">
    <property type="entry name" value="40S RIBOSOMAL PROTEIN S11 FAMILY MEMBER"/>
    <property type="match status" value="1"/>
</dbReference>
<dbReference type="PANTHER" id="PTHR10744:SF1">
    <property type="entry name" value="SMALL RIBOSOMAL SUBUNIT PROTEIN US17M"/>
    <property type="match status" value="1"/>
</dbReference>
<dbReference type="Pfam" id="PF00366">
    <property type="entry name" value="Ribosomal_S17"/>
    <property type="match status" value="1"/>
</dbReference>
<dbReference type="PRINTS" id="PR00973">
    <property type="entry name" value="RIBOSOMALS17"/>
</dbReference>
<dbReference type="SUPFAM" id="SSF50249">
    <property type="entry name" value="Nucleic acid-binding proteins"/>
    <property type="match status" value="1"/>
</dbReference>
<dbReference type="PROSITE" id="PS00056">
    <property type="entry name" value="RIBOSOMAL_S17"/>
    <property type="match status" value="1"/>
</dbReference>
<evidence type="ECO:0000255" key="1">
    <source>
        <dbReference type="HAMAP-Rule" id="MF_01345"/>
    </source>
</evidence>
<evidence type="ECO:0000305" key="2"/>
<reference key="1">
    <citation type="journal article" date="2008" name="Antimicrob. Agents Chemother.">
        <title>Whole-genome pyrosequencing of an epidemic multidrug-resistant Acinetobacter baumannii strain belonging to the European clone II group.</title>
        <authorList>
            <person name="Iacono M."/>
            <person name="Villa L."/>
            <person name="Fortini D."/>
            <person name="Bordoni R."/>
            <person name="Imperi F."/>
            <person name="Bonnal R.J."/>
            <person name="Sicheritz-Ponten T."/>
            <person name="De Bellis G."/>
            <person name="Visca P."/>
            <person name="Cassone A."/>
            <person name="Carattoli A."/>
        </authorList>
    </citation>
    <scope>NUCLEOTIDE SEQUENCE [LARGE SCALE GENOMIC DNA]</scope>
    <source>
        <strain>ACICU</strain>
    </source>
</reference>
<gene>
    <name evidence="1" type="primary">rpsQ</name>
    <name type="ordered locus">ACICU_03270</name>
</gene>
<protein>
    <recommendedName>
        <fullName evidence="1">Small ribosomal subunit protein uS17</fullName>
    </recommendedName>
    <alternativeName>
        <fullName evidence="2">30S ribosomal protein S17</fullName>
    </alternativeName>
</protein>
<comment type="function">
    <text evidence="1">One of the primary rRNA binding proteins, it binds specifically to the 5'-end of 16S ribosomal RNA.</text>
</comment>
<comment type="subunit">
    <text evidence="1">Part of the 30S ribosomal subunit.</text>
</comment>
<comment type="similarity">
    <text evidence="1">Belongs to the universal ribosomal protein uS17 family.</text>
</comment>
<feature type="chain" id="PRO_1000143209" description="Small ribosomal subunit protein uS17">
    <location>
        <begin position="1"/>
        <end position="85"/>
    </location>
</feature>
<keyword id="KW-0687">Ribonucleoprotein</keyword>
<keyword id="KW-0689">Ribosomal protein</keyword>
<keyword id="KW-0694">RNA-binding</keyword>
<keyword id="KW-0699">rRNA-binding</keyword>
<accession>B2HZ99</accession>
<proteinExistence type="inferred from homology"/>
<sequence>MSEKTVRTLTGKVVSDKMDKSIVVLIERRVQHPLYGKSIRRSTKLHAHDENNVAKIGDVVTIKESRPISKTKAWTLVEVVEAAAE</sequence>
<organism>
    <name type="scientific">Acinetobacter baumannii (strain ACICU)</name>
    <dbReference type="NCBI Taxonomy" id="405416"/>
    <lineage>
        <taxon>Bacteria</taxon>
        <taxon>Pseudomonadati</taxon>
        <taxon>Pseudomonadota</taxon>
        <taxon>Gammaproteobacteria</taxon>
        <taxon>Moraxellales</taxon>
        <taxon>Moraxellaceae</taxon>
        <taxon>Acinetobacter</taxon>
        <taxon>Acinetobacter calcoaceticus/baumannii complex</taxon>
    </lineage>
</organism>
<name>RS17_ACIBC</name>